<proteinExistence type="predicted"/>
<sequence>MGFLERIKKLFSKEEEKQEESILSNPLERLKKGDIIEIDGETWEVTDVALYDYGASKEKEWEIRSASRRGFLSLEEGKIYFFEEIDPEELEPDPGEHFRKYGKPPEYVTYKGKRYRLKYAGKAKYIKNLESYPVTIWEFRSEDGEMIDLEIWDEYEIEAYKGRELQEWEIESILPR</sequence>
<feature type="chain" id="PRO_0000186920" description="Uncharacterized protein aq_1347">
    <location>
        <begin position="1"/>
        <end position="176"/>
    </location>
</feature>
<name>Y1347_AQUAE</name>
<protein>
    <recommendedName>
        <fullName>Uncharacterized protein aq_1347</fullName>
    </recommendedName>
</protein>
<keyword id="KW-1185">Reference proteome</keyword>
<accession>O67362</accession>
<gene>
    <name type="ordered locus">aq_1347</name>
</gene>
<reference key="1">
    <citation type="journal article" date="1998" name="Nature">
        <title>The complete genome of the hyperthermophilic bacterium Aquifex aeolicus.</title>
        <authorList>
            <person name="Deckert G."/>
            <person name="Warren P.V."/>
            <person name="Gaasterland T."/>
            <person name="Young W.G."/>
            <person name="Lenox A.L."/>
            <person name="Graham D.E."/>
            <person name="Overbeek R."/>
            <person name="Snead M.A."/>
            <person name="Keller M."/>
            <person name="Aujay M."/>
            <person name="Huber R."/>
            <person name="Feldman R.A."/>
            <person name="Short J.M."/>
            <person name="Olsen G.J."/>
            <person name="Swanson R.V."/>
        </authorList>
    </citation>
    <scope>NUCLEOTIDE SEQUENCE [LARGE SCALE GENOMIC DNA]</scope>
    <source>
        <strain>VF5</strain>
    </source>
</reference>
<dbReference type="EMBL" id="AE000657">
    <property type="protein sequence ID" value="AAC07333.1"/>
    <property type="molecule type" value="Genomic_DNA"/>
</dbReference>
<dbReference type="PIR" id="G70416">
    <property type="entry name" value="G70416"/>
</dbReference>
<dbReference type="RefSeq" id="NP_213926.1">
    <property type="nucleotide sequence ID" value="NC_000918.1"/>
</dbReference>
<dbReference type="RefSeq" id="WP_010880864.1">
    <property type="nucleotide sequence ID" value="NC_000918.1"/>
</dbReference>
<dbReference type="SMR" id="O67362"/>
<dbReference type="STRING" id="224324.aq_1347"/>
<dbReference type="EnsemblBacteria" id="AAC07333">
    <property type="protein sequence ID" value="AAC07333"/>
    <property type="gene ID" value="aq_1347"/>
</dbReference>
<dbReference type="KEGG" id="aae:aq_1347"/>
<dbReference type="HOGENOM" id="CLU_121857_0_0_0"/>
<dbReference type="InParanoid" id="O67362"/>
<dbReference type="OrthoDB" id="5502786at2"/>
<dbReference type="Proteomes" id="UP000000798">
    <property type="component" value="Chromosome"/>
</dbReference>
<dbReference type="InterPro" id="IPR025235">
    <property type="entry name" value="DUF4178"/>
</dbReference>
<dbReference type="Pfam" id="PF13785">
    <property type="entry name" value="DUF4178"/>
    <property type="match status" value="1"/>
</dbReference>
<organism>
    <name type="scientific">Aquifex aeolicus (strain VF5)</name>
    <dbReference type="NCBI Taxonomy" id="224324"/>
    <lineage>
        <taxon>Bacteria</taxon>
        <taxon>Pseudomonadati</taxon>
        <taxon>Aquificota</taxon>
        <taxon>Aquificia</taxon>
        <taxon>Aquificales</taxon>
        <taxon>Aquificaceae</taxon>
        <taxon>Aquifex</taxon>
    </lineage>
</organism>